<accession>B4T660</accession>
<reference key="1">
    <citation type="journal article" date="2011" name="J. Bacteriol.">
        <title>Comparative genomics of 28 Salmonella enterica isolates: evidence for CRISPR-mediated adaptive sublineage evolution.</title>
        <authorList>
            <person name="Fricke W.F."/>
            <person name="Mammel M.K."/>
            <person name="McDermott P.F."/>
            <person name="Tartera C."/>
            <person name="White D.G."/>
            <person name="Leclerc J.E."/>
            <person name="Ravel J."/>
            <person name="Cebula T.A."/>
        </authorList>
    </citation>
    <scope>NUCLEOTIDE SEQUENCE [LARGE SCALE GENOMIC DNA]</scope>
    <source>
        <strain>SL254</strain>
    </source>
</reference>
<gene>
    <name evidence="1" type="primary">zupT</name>
    <name type="ordered locus">SNSL254_A3448</name>
</gene>
<keyword id="KW-0997">Cell inner membrane</keyword>
<keyword id="KW-1003">Cell membrane</keyword>
<keyword id="KW-0406">Ion transport</keyword>
<keyword id="KW-0408">Iron</keyword>
<keyword id="KW-0472">Membrane</keyword>
<keyword id="KW-0479">Metal-binding</keyword>
<keyword id="KW-0812">Transmembrane</keyword>
<keyword id="KW-1133">Transmembrane helix</keyword>
<keyword id="KW-0813">Transport</keyword>
<keyword id="KW-0862">Zinc</keyword>
<keyword id="KW-0864">Zinc transport</keyword>
<comment type="function">
    <text evidence="1">Mediates zinc uptake. May also transport other divalent cations.</text>
</comment>
<comment type="catalytic activity">
    <reaction evidence="1">
        <text>Zn(2+)(in) = Zn(2+)(out)</text>
        <dbReference type="Rhea" id="RHEA:29351"/>
        <dbReference type="ChEBI" id="CHEBI:29105"/>
    </reaction>
</comment>
<comment type="subcellular location">
    <subcellularLocation>
        <location evidence="1">Cell inner membrane</location>
        <topology evidence="1">Multi-pass membrane protein</topology>
    </subcellularLocation>
</comment>
<comment type="similarity">
    <text evidence="1">Belongs to the ZIP transporter (TC 2.A.5) family. ZupT subfamily.</text>
</comment>
<feature type="chain" id="PRO_1000128965" description="Zinc transporter ZupT">
    <location>
        <begin position="1"/>
        <end position="257"/>
    </location>
</feature>
<feature type="transmembrane region" description="Helical" evidence="1">
    <location>
        <begin position="5"/>
        <end position="25"/>
    </location>
</feature>
<feature type="transmembrane region" description="Helical" evidence="1">
    <location>
        <begin position="32"/>
        <end position="52"/>
    </location>
</feature>
<feature type="transmembrane region" description="Helical" evidence="1">
    <location>
        <begin position="61"/>
        <end position="81"/>
    </location>
</feature>
<feature type="transmembrane region" description="Helical" evidence="1">
    <location>
        <begin position="109"/>
        <end position="129"/>
    </location>
</feature>
<feature type="transmembrane region" description="Helical" evidence="1">
    <location>
        <begin position="137"/>
        <end position="157"/>
    </location>
</feature>
<feature type="transmembrane region" description="Helical" evidence="1">
    <location>
        <begin position="171"/>
        <end position="191"/>
    </location>
</feature>
<feature type="transmembrane region" description="Helical" evidence="1">
    <location>
        <begin position="195"/>
        <end position="215"/>
    </location>
</feature>
<feature type="transmembrane region" description="Helical" evidence="1">
    <location>
        <begin position="236"/>
        <end position="256"/>
    </location>
</feature>
<feature type="binding site" description="M2 metal binding site" evidence="1">
    <location>
        <position position="120"/>
    </location>
    <ligand>
        <name>Fe(2+)</name>
        <dbReference type="ChEBI" id="CHEBI:29033"/>
    </ligand>
</feature>
<feature type="binding site" description="M2 metal binding site" evidence="1">
    <location>
        <position position="123"/>
    </location>
    <ligand>
        <name>Fe(2+)</name>
        <dbReference type="ChEBI" id="CHEBI:29033"/>
    </ligand>
</feature>
<feature type="binding site" description="M1 metal binding site" evidence="1">
    <location>
        <position position="123"/>
    </location>
    <ligand>
        <name>Zn(2+)</name>
        <dbReference type="ChEBI" id="CHEBI:29105"/>
    </ligand>
</feature>
<feature type="binding site" description="M1 metal binding site" evidence="1">
    <location>
        <position position="148"/>
    </location>
    <ligand>
        <name>Zn(2+)</name>
        <dbReference type="ChEBI" id="CHEBI:29105"/>
    </ligand>
</feature>
<feature type="binding site" description="M2 metal binding site" evidence="1">
    <location>
        <position position="149"/>
    </location>
    <ligand>
        <name>Fe(2+)</name>
        <dbReference type="ChEBI" id="CHEBI:29033"/>
    </ligand>
</feature>
<feature type="binding site" description="M2 metal binding site" evidence="1">
    <location>
        <position position="152"/>
    </location>
    <ligand>
        <name>Fe(2+)</name>
        <dbReference type="ChEBI" id="CHEBI:29033"/>
    </ligand>
</feature>
<feature type="binding site" description="M1 metal binding site" evidence="1">
    <location>
        <position position="152"/>
    </location>
    <ligand>
        <name>Zn(2+)</name>
        <dbReference type="ChEBI" id="CHEBI:29105"/>
    </ligand>
</feature>
<feature type="binding site" description="M2 metal binding site" evidence="1">
    <location>
        <position position="181"/>
    </location>
    <ligand>
        <name>Fe(2+)</name>
        <dbReference type="ChEBI" id="CHEBI:29033"/>
    </ligand>
</feature>
<organism>
    <name type="scientific">Salmonella newport (strain SL254)</name>
    <dbReference type="NCBI Taxonomy" id="423368"/>
    <lineage>
        <taxon>Bacteria</taxon>
        <taxon>Pseudomonadati</taxon>
        <taxon>Pseudomonadota</taxon>
        <taxon>Gammaproteobacteria</taxon>
        <taxon>Enterobacterales</taxon>
        <taxon>Enterobacteriaceae</taxon>
        <taxon>Salmonella</taxon>
    </lineage>
</organism>
<proteinExistence type="inferred from homology"/>
<name>ZUPT_SALNS</name>
<sequence length="257" mass="26544">MSVPLILTLLAGAATFIGAFLGVLGQKPSNRVLAFSLGFAAGIMLLISLMEMLPAALDTEGMSPVLGYGMFIIGLLGYFGLDRLLPHAHPQDLVQKRQQPLPGSIKRTAILLTLGISLHNFPEGIATFVTASSNLELGFGIALAVALHNIPEGLAVAGPVYAATGSKRTAIFWAGISGMAEILGGVLAWLILGSLVSPIVMAAIMAAVAGIMVALSVDELMPLAKEIDPNNNPSYGVLCGMSIMGLSLVILQTIGIG</sequence>
<dbReference type="EMBL" id="CP001113">
    <property type="protein sequence ID" value="ACF62567.1"/>
    <property type="molecule type" value="Genomic_DNA"/>
</dbReference>
<dbReference type="RefSeq" id="WP_000115874.1">
    <property type="nucleotide sequence ID" value="NZ_CCMR01000001.1"/>
</dbReference>
<dbReference type="SMR" id="B4T660"/>
<dbReference type="KEGG" id="see:SNSL254_A3448"/>
<dbReference type="HOGENOM" id="CLU_015114_1_3_6"/>
<dbReference type="Proteomes" id="UP000008824">
    <property type="component" value="Chromosome"/>
</dbReference>
<dbReference type="GO" id="GO:0005886">
    <property type="term" value="C:plasma membrane"/>
    <property type="evidence" value="ECO:0007669"/>
    <property type="project" value="UniProtKB-SubCell"/>
</dbReference>
<dbReference type="GO" id="GO:0046872">
    <property type="term" value="F:metal ion binding"/>
    <property type="evidence" value="ECO:0007669"/>
    <property type="project" value="UniProtKB-KW"/>
</dbReference>
<dbReference type="GO" id="GO:0005385">
    <property type="term" value="F:zinc ion transmembrane transporter activity"/>
    <property type="evidence" value="ECO:0007669"/>
    <property type="project" value="UniProtKB-UniRule"/>
</dbReference>
<dbReference type="HAMAP" id="MF_00548">
    <property type="entry name" value="ZupT"/>
    <property type="match status" value="1"/>
</dbReference>
<dbReference type="InterPro" id="IPR003689">
    <property type="entry name" value="ZIP"/>
</dbReference>
<dbReference type="InterPro" id="IPR023498">
    <property type="entry name" value="Zn_transptr_ZupT"/>
</dbReference>
<dbReference type="NCBIfam" id="NF003243">
    <property type="entry name" value="PRK04201.1"/>
    <property type="match status" value="1"/>
</dbReference>
<dbReference type="PANTHER" id="PTHR11040:SF205">
    <property type="entry name" value="ZINC TRANSPORTER ZUPT"/>
    <property type="match status" value="1"/>
</dbReference>
<dbReference type="PANTHER" id="PTHR11040">
    <property type="entry name" value="ZINC/IRON TRANSPORTER"/>
    <property type="match status" value="1"/>
</dbReference>
<dbReference type="Pfam" id="PF02535">
    <property type="entry name" value="Zip"/>
    <property type="match status" value="2"/>
</dbReference>
<protein>
    <recommendedName>
        <fullName evidence="1">Zinc transporter ZupT</fullName>
    </recommendedName>
</protein>
<evidence type="ECO:0000255" key="1">
    <source>
        <dbReference type="HAMAP-Rule" id="MF_00548"/>
    </source>
</evidence>